<sequence>MSEFSQTVPELVAWARKNDFSISLPVDRLSFLLAVATLNGERLDGEMSEGELVDAFRHVSDAFEQTSETIGVRANNAINDMVRQRLLNRFTSEQAEGNAIYRLTPLGIGITDYYIRQREFSTLRLSMQLSIVAGELKRAADAAEEGGDEFHWHRNVYAPLKYSVAEIFDSIDLTQRLMDEQQQQVKDDIAQLLNKDWRAAISSCELLLSETSGTLRELQDTLEAAGDKLQANLLRIQDATMTHDDLHFVDRLVFDLQSKLDRIISWGQQSIDLWIGYDRHVHKFIRTAIDMDKNRVFAQRLRQSVQTYFDEPWALTYANADRLLDMRDEEMVLRDEEVTGELPEDLEYEEFNEIREQLAAIIEEQLAVYKTRQVPLDLGLVVREYLSQYPRARHFDVARIVIDQAVRLGVAQADFTGLPAKWQPINDYGAKVQAHVIDKY</sequence>
<accession>A1A9J9</accession>
<keyword id="KW-0106">Calcium</keyword>
<keyword id="KW-0131">Cell cycle</keyword>
<keyword id="KW-0132">Cell division</keyword>
<keyword id="KW-0159">Chromosome partition</keyword>
<keyword id="KW-0963">Cytoplasm</keyword>
<keyword id="KW-0226">DNA condensation</keyword>
<keyword id="KW-1185">Reference proteome</keyword>
<feature type="chain" id="PRO_1000069928" description="Chromosome partition protein MukF">
    <location>
        <begin position="1"/>
        <end position="440"/>
    </location>
</feature>
<feature type="region of interest" description="Leucine-zipper">
    <location>
        <begin position="208"/>
        <end position="236"/>
    </location>
</feature>
<reference key="1">
    <citation type="journal article" date="2007" name="J. Bacteriol.">
        <title>The genome sequence of avian pathogenic Escherichia coli strain O1:K1:H7 shares strong similarities with human extraintestinal pathogenic E. coli genomes.</title>
        <authorList>
            <person name="Johnson T.J."/>
            <person name="Kariyawasam S."/>
            <person name="Wannemuehler Y."/>
            <person name="Mangiamele P."/>
            <person name="Johnson S.J."/>
            <person name="Doetkott C."/>
            <person name="Skyberg J.A."/>
            <person name="Lynne A.M."/>
            <person name="Johnson J.R."/>
            <person name="Nolan L.K."/>
        </authorList>
    </citation>
    <scope>NUCLEOTIDE SEQUENCE [LARGE SCALE GENOMIC DNA]</scope>
</reference>
<comment type="function">
    <text evidence="1">Involved in chromosome condensation, segregation and cell cycle progression. May participate in facilitating chromosome segregation by condensation DNA from both sides of a centrally located replisome during cell division. Not required for mini-F plasmid partitioning. Probably acts via its interaction with MukB and MukE. Overexpression results in anucleate cells. It has a calcium binding activity.</text>
</comment>
<comment type="subunit">
    <text evidence="1">Interacts, and probably forms a ternary complex, with MukE and MukB via its C-terminal region. The complex formation is stimulated by calcium or magnesium. It is required for an interaction between MukE and MukB.</text>
</comment>
<comment type="subcellular location">
    <subcellularLocation>
        <location evidence="1">Cytoplasm</location>
        <location evidence="1">Nucleoid</location>
    </subcellularLocation>
    <text evidence="1">Restricted to the nucleoid region.</text>
</comment>
<comment type="similarity">
    <text evidence="1">Belongs to the MukF family.</text>
</comment>
<evidence type="ECO:0000255" key="1">
    <source>
        <dbReference type="HAMAP-Rule" id="MF_01803"/>
    </source>
</evidence>
<name>MUKF_ECOK1</name>
<gene>
    <name evidence="1" type="primary">mukF</name>
    <name type="ordered locus">Ecok1_08450</name>
    <name type="ORF">APECO1_34</name>
</gene>
<protein>
    <recommendedName>
        <fullName evidence="1">Chromosome partition protein MukF</fullName>
    </recommendedName>
</protein>
<proteinExistence type="inferred from homology"/>
<dbReference type="EMBL" id="CP000468">
    <property type="protein sequence ID" value="ABJ00339.1"/>
    <property type="molecule type" value="Genomic_DNA"/>
</dbReference>
<dbReference type="RefSeq" id="WP_001288856.1">
    <property type="nucleotide sequence ID" value="NZ_CADILS010000016.1"/>
</dbReference>
<dbReference type="SMR" id="A1A9J9"/>
<dbReference type="KEGG" id="ecv:APECO1_34"/>
<dbReference type="HOGENOM" id="CLU_049853_0_0_6"/>
<dbReference type="Proteomes" id="UP000008216">
    <property type="component" value="Chromosome"/>
</dbReference>
<dbReference type="GO" id="GO:0005737">
    <property type="term" value="C:cytoplasm"/>
    <property type="evidence" value="ECO:0007669"/>
    <property type="project" value="UniProtKB-UniRule"/>
</dbReference>
<dbReference type="GO" id="GO:0009295">
    <property type="term" value="C:nucleoid"/>
    <property type="evidence" value="ECO:0007669"/>
    <property type="project" value="UniProtKB-SubCell"/>
</dbReference>
<dbReference type="GO" id="GO:0005509">
    <property type="term" value="F:calcium ion binding"/>
    <property type="evidence" value="ECO:0007669"/>
    <property type="project" value="UniProtKB-UniRule"/>
</dbReference>
<dbReference type="GO" id="GO:0051301">
    <property type="term" value="P:cell division"/>
    <property type="evidence" value="ECO:0007669"/>
    <property type="project" value="UniProtKB-KW"/>
</dbReference>
<dbReference type="GO" id="GO:0030261">
    <property type="term" value="P:chromosome condensation"/>
    <property type="evidence" value="ECO:0007669"/>
    <property type="project" value="UniProtKB-KW"/>
</dbReference>
<dbReference type="GO" id="GO:0007059">
    <property type="term" value="P:chromosome segregation"/>
    <property type="evidence" value="ECO:0007669"/>
    <property type="project" value="UniProtKB-UniRule"/>
</dbReference>
<dbReference type="GO" id="GO:0006260">
    <property type="term" value="P:DNA replication"/>
    <property type="evidence" value="ECO:0007669"/>
    <property type="project" value="UniProtKB-UniRule"/>
</dbReference>
<dbReference type="CDD" id="cd16337">
    <property type="entry name" value="MukF_C"/>
    <property type="match status" value="1"/>
</dbReference>
<dbReference type="CDD" id="cd16335">
    <property type="entry name" value="MukF_N"/>
    <property type="match status" value="1"/>
</dbReference>
<dbReference type="Gene3D" id="1.20.58.590">
    <property type="entry name" value="Chromosome partition protein MukF, middle domain"/>
    <property type="match status" value="1"/>
</dbReference>
<dbReference type="Gene3D" id="1.10.225.40">
    <property type="entry name" value="MukF, C-terminal domain"/>
    <property type="match status" value="1"/>
</dbReference>
<dbReference type="Gene3D" id="1.10.10.10">
    <property type="entry name" value="Winged helix-like DNA-binding domain superfamily/Winged helix DNA-binding domain"/>
    <property type="match status" value="1"/>
</dbReference>
<dbReference type="HAMAP" id="MF_01803">
    <property type="entry name" value="MukF"/>
    <property type="match status" value="1"/>
</dbReference>
<dbReference type="InterPro" id="IPR005582">
    <property type="entry name" value="Chromosome_partition_MukF"/>
</dbReference>
<dbReference type="InterPro" id="IPR033441">
    <property type="entry name" value="MukF_C"/>
</dbReference>
<dbReference type="InterPro" id="IPR038198">
    <property type="entry name" value="MukF_C_sf"/>
</dbReference>
<dbReference type="InterPro" id="IPR033440">
    <property type="entry name" value="MukF_M"/>
</dbReference>
<dbReference type="InterPro" id="IPR036141">
    <property type="entry name" value="MukF_M_sp"/>
</dbReference>
<dbReference type="InterPro" id="IPR033439">
    <property type="entry name" value="MukF_WHTH"/>
</dbReference>
<dbReference type="InterPro" id="IPR036388">
    <property type="entry name" value="WH-like_DNA-bd_sf"/>
</dbReference>
<dbReference type="InterPro" id="IPR036390">
    <property type="entry name" value="WH_DNA-bd_sf"/>
</dbReference>
<dbReference type="NCBIfam" id="NF003615">
    <property type="entry name" value="PRK05260.1"/>
    <property type="match status" value="1"/>
</dbReference>
<dbReference type="Pfam" id="PF03882">
    <property type="entry name" value="KicB"/>
    <property type="match status" value="1"/>
</dbReference>
<dbReference type="Pfam" id="PF17193">
    <property type="entry name" value="MukF_C"/>
    <property type="match status" value="1"/>
</dbReference>
<dbReference type="Pfam" id="PF17192">
    <property type="entry name" value="MukF_M"/>
    <property type="match status" value="1"/>
</dbReference>
<dbReference type="PIRSF" id="PIRSF018282">
    <property type="entry name" value="MukF"/>
    <property type="match status" value="1"/>
</dbReference>
<dbReference type="SUPFAM" id="SSF140570">
    <property type="entry name" value="MukF C-terminal domain-like"/>
    <property type="match status" value="1"/>
</dbReference>
<dbReference type="SUPFAM" id="SSF46785">
    <property type="entry name" value="Winged helix' DNA-binding domain"/>
    <property type="match status" value="1"/>
</dbReference>
<organism>
    <name type="scientific">Escherichia coli O1:K1 / APEC</name>
    <dbReference type="NCBI Taxonomy" id="405955"/>
    <lineage>
        <taxon>Bacteria</taxon>
        <taxon>Pseudomonadati</taxon>
        <taxon>Pseudomonadota</taxon>
        <taxon>Gammaproteobacteria</taxon>
        <taxon>Enterobacterales</taxon>
        <taxon>Enterobacteriaceae</taxon>
        <taxon>Escherichia</taxon>
    </lineage>
</organism>